<keyword id="KW-0067">ATP-binding</keyword>
<keyword id="KW-0342">GTP-binding</keyword>
<keyword id="KW-0547">Nucleotide-binding</keyword>
<keyword id="KW-1185">Reference proteome</keyword>
<keyword id="KW-0694">RNA-binding</keyword>
<accession>A8AQ96</accession>
<evidence type="ECO:0000255" key="1">
    <source>
        <dbReference type="HAMAP-Rule" id="MF_00636"/>
    </source>
</evidence>
<organism>
    <name type="scientific">Citrobacter koseri (strain ATCC BAA-895 / CDC 4225-83 / SGSC4696)</name>
    <dbReference type="NCBI Taxonomy" id="290338"/>
    <lineage>
        <taxon>Bacteria</taxon>
        <taxon>Pseudomonadati</taxon>
        <taxon>Pseudomonadota</taxon>
        <taxon>Gammaproteobacteria</taxon>
        <taxon>Enterobacterales</taxon>
        <taxon>Enterobacteriaceae</taxon>
        <taxon>Citrobacter</taxon>
    </lineage>
</organism>
<reference key="1">
    <citation type="submission" date="2007-08" db="EMBL/GenBank/DDBJ databases">
        <authorList>
            <consortium name="The Citrobacter koseri Genome Sequencing Project"/>
            <person name="McClelland M."/>
            <person name="Sanderson E.K."/>
            <person name="Porwollik S."/>
            <person name="Spieth J."/>
            <person name="Clifton W.S."/>
            <person name="Latreille P."/>
            <person name="Courtney L."/>
            <person name="Wang C."/>
            <person name="Pepin K."/>
            <person name="Bhonagiri V."/>
            <person name="Nash W."/>
            <person name="Johnson M."/>
            <person name="Thiruvilangam P."/>
            <person name="Wilson R."/>
        </authorList>
    </citation>
    <scope>NUCLEOTIDE SEQUENCE [LARGE SCALE GENOMIC DNA]</scope>
    <source>
        <strain>ATCC BAA-895 / CDC 4225-83 / SGSC4696</strain>
    </source>
</reference>
<name>RAPZ_CITK8</name>
<proteinExistence type="inferred from homology"/>
<protein>
    <recommendedName>
        <fullName evidence="1">RNase adapter protein RapZ</fullName>
    </recommendedName>
</protein>
<dbReference type="EMBL" id="CP000822">
    <property type="protein sequence ID" value="ABV15659.1"/>
    <property type="molecule type" value="Genomic_DNA"/>
</dbReference>
<dbReference type="RefSeq" id="WP_012135338.1">
    <property type="nucleotide sequence ID" value="NC_009792.1"/>
</dbReference>
<dbReference type="SMR" id="A8AQ96"/>
<dbReference type="STRING" id="290338.CKO_04608"/>
<dbReference type="GeneID" id="45138148"/>
<dbReference type="KEGG" id="cko:CKO_04608"/>
<dbReference type="HOGENOM" id="CLU_059558_1_1_6"/>
<dbReference type="OrthoDB" id="9784461at2"/>
<dbReference type="Proteomes" id="UP000008148">
    <property type="component" value="Chromosome"/>
</dbReference>
<dbReference type="GO" id="GO:0005524">
    <property type="term" value="F:ATP binding"/>
    <property type="evidence" value="ECO:0007669"/>
    <property type="project" value="UniProtKB-UniRule"/>
</dbReference>
<dbReference type="GO" id="GO:0005525">
    <property type="term" value="F:GTP binding"/>
    <property type="evidence" value="ECO:0007669"/>
    <property type="project" value="UniProtKB-UniRule"/>
</dbReference>
<dbReference type="GO" id="GO:0003723">
    <property type="term" value="F:RNA binding"/>
    <property type="evidence" value="ECO:0007669"/>
    <property type="project" value="UniProtKB-KW"/>
</dbReference>
<dbReference type="Gene3D" id="3.40.50.300">
    <property type="entry name" value="P-loop containing nucleotide triphosphate hydrolases"/>
    <property type="match status" value="1"/>
</dbReference>
<dbReference type="HAMAP" id="MF_00636">
    <property type="entry name" value="RapZ_like"/>
    <property type="match status" value="1"/>
</dbReference>
<dbReference type="InterPro" id="IPR027417">
    <property type="entry name" value="P-loop_NTPase"/>
</dbReference>
<dbReference type="InterPro" id="IPR005337">
    <property type="entry name" value="RapZ-like"/>
</dbReference>
<dbReference type="InterPro" id="IPR053930">
    <property type="entry name" value="RapZ-like_N"/>
</dbReference>
<dbReference type="InterPro" id="IPR053931">
    <property type="entry name" value="RapZ_C"/>
</dbReference>
<dbReference type="NCBIfam" id="NF003828">
    <property type="entry name" value="PRK05416.1"/>
    <property type="match status" value="1"/>
</dbReference>
<dbReference type="PANTHER" id="PTHR30448">
    <property type="entry name" value="RNASE ADAPTER PROTEIN RAPZ"/>
    <property type="match status" value="1"/>
</dbReference>
<dbReference type="PANTHER" id="PTHR30448:SF0">
    <property type="entry name" value="RNASE ADAPTER PROTEIN RAPZ"/>
    <property type="match status" value="1"/>
</dbReference>
<dbReference type="Pfam" id="PF22740">
    <property type="entry name" value="PapZ_C"/>
    <property type="match status" value="1"/>
</dbReference>
<dbReference type="Pfam" id="PF03668">
    <property type="entry name" value="RapZ-like_N"/>
    <property type="match status" value="1"/>
</dbReference>
<dbReference type="PIRSF" id="PIRSF005052">
    <property type="entry name" value="P-loopkin"/>
    <property type="match status" value="1"/>
</dbReference>
<dbReference type="SUPFAM" id="SSF52540">
    <property type="entry name" value="P-loop containing nucleoside triphosphate hydrolases"/>
    <property type="match status" value="1"/>
</dbReference>
<sequence>MVLMIVSGRSGSGKSVALRALEDMGFYCVDNLPVVLLPDLARTLADRQISAAVSIDVRNMPESPEIFEQAMNNLPDAFSPQLLFLDADRNTLIRRYSDTRRLHPLSSKNLSLESAIDQESDLLEPLRSRADLIVDTSEMSVHELAEMLRTRLLGKRERELTMVFESFGFKHGIPIDADYVFDVRFLPNPHWDPKLRPMTGLDKPVAAFLDRHTEVHNFIYQTRSYLELWLPMLETNNRSYLTVAIGCTGGKHRSVYIAEQLADYFRSRGKNVQSRHRTLEKRKT</sequence>
<comment type="function">
    <text evidence="1">Modulates the synthesis of GlmS, by affecting the processing and stability of the regulatory small RNA GlmZ. When glucosamine-6-phosphate (GlcN6P) concentrations are high in the cell, RapZ binds GlmZ and targets it to cleavage by RNase E. Consequently, GlmZ is inactivated and unable to activate GlmS synthesis. Under low GlcN6P concentrations, RapZ is sequestered and inactivated by an other regulatory small RNA, GlmY, preventing GlmZ degradation and leading to synthesis of GlmS.</text>
</comment>
<comment type="subunit">
    <text evidence="1">Homotrimer.</text>
</comment>
<comment type="similarity">
    <text evidence="1">Belongs to the RapZ-like family. RapZ subfamily.</text>
</comment>
<gene>
    <name evidence="1" type="primary">rapZ</name>
    <name type="ordered locus">CKO_04608</name>
</gene>
<feature type="chain" id="PRO_1000056814" description="RNase adapter protein RapZ">
    <location>
        <begin position="1"/>
        <end position="284"/>
    </location>
</feature>
<feature type="region of interest" description="RNA-binding" evidence="1">
    <location>
        <begin position="266"/>
        <end position="284"/>
    </location>
</feature>
<feature type="binding site" evidence="1">
    <location>
        <begin position="8"/>
        <end position="15"/>
    </location>
    <ligand>
        <name>ATP</name>
        <dbReference type="ChEBI" id="CHEBI:30616"/>
    </ligand>
</feature>
<feature type="binding site" evidence="1">
    <location>
        <begin position="56"/>
        <end position="59"/>
    </location>
    <ligand>
        <name>GTP</name>
        <dbReference type="ChEBI" id="CHEBI:37565"/>
    </ligand>
</feature>